<gene>
    <name evidence="1" type="primary">proQ</name>
    <name type="ordered locus">YpAngola_A2664</name>
</gene>
<comment type="function">
    <text evidence="1">RNA chaperone with significant RNA binding, RNA strand exchange and RNA duplexing activities. May regulate ProP activity through an RNA-based, post-transcriptional mechanism.</text>
</comment>
<comment type="subcellular location">
    <subcellularLocation>
        <location evidence="1">Cytoplasm</location>
    </subcellularLocation>
</comment>
<comment type="similarity">
    <text evidence="1">Belongs to the ProQ family.</text>
</comment>
<proteinExistence type="inferred from homology"/>
<accession>A9R0E4</accession>
<protein>
    <recommendedName>
        <fullName evidence="1">RNA chaperone ProQ</fullName>
    </recommendedName>
</protein>
<sequence length="237" mass="26498">MENQPKLNSSKEVIAFLAERFPLCFTAEGEARPLKIGIFQDLVERVQGEENLSKTQLRSALRLYTSSWRYLYGVKVGAERVDLDGNPCGVLEEQHVEHARKQLEEAKARVQAQRAEQQAKKREAAIAAGETPEPRRPRPAGKKPAPRREAGAAPENRKPRQSPRPQQVRPPRPQVEENQPRPVPVTDISKLQIGQEIKVRAGKSAMDATVLEIAKDGVRVQLSSGLAMIVRAEHLQF</sequence>
<dbReference type="EMBL" id="CP000901">
    <property type="protein sequence ID" value="ABX87559.1"/>
    <property type="molecule type" value="Genomic_DNA"/>
</dbReference>
<dbReference type="RefSeq" id="WP_002210849.1">
    <property type="nucleotide sequence ID" value="NZ_CP009935.1"/>
</dbReference>
<dbReference type="SMR" id="A9R0E4"/>
<dbReference type="GeneID" id="96665860"/>
<dbReference type="KEGG" id="ypg:YpAngola_A2664"/>
<dbReference type="PATRIC" id="fig|349746.12.peg.3692"/>
<dbReference type="GO" id="GO:0005829">
    <property type="term" value="C:cytosol"/>
    <property type="evidence" value="ECO:0007669"/>
    <property type="project" value="TreeGrafter"/>
</dbReference>
<dbReference type="GO" id="GO:0033592">
    <property type="term" value="F:RNA strand annealing activity"/>
    <property type="evidence" value="ECO:0007669"/>
    <property type="project" value="UniProtKB-UniRule"/>
</dbReference>
<dbReference type="GO" id="GO:0034057">
    <property type="term" value="F:RNA strand-exchange activity"/>
    <property type="evidence" value="ECO:0007669"/>
    <property type="project" value="UniProtKB-UniRule"/>
</dbReference>
<dbReference type="GO" id="GO:0010608">
    <property type="term" value="P:post-transcriptional regulation of gene expression"/>
    <property type="evidence" value="ECO:0007669"/>
    <property type="project" value="InterPro"/>
</dbReference>
<dbReference type="FunFam" id="1.10.1710.10:FF:000001">
    <property type="entry name" value="RNA chaperone ProQ"/>
    <property type="match status" value="1"/>
</dbReference>
<dbReference type="Gene3D" id="1.10.1710.10">
    <property type="entry name" value="ProQ/FinO domain"/>
    <property type="match status" value="1"/>
</dbReference>
<dbReference type="HAMAP" id="MF_00749">
    <property type="entry name" value="ProQ"/>
    <property type="match status" value="1"/>
</dbReference>
<dbReference type="InterPro" id="IPR023529">
    <property type="entry name" value="ProQ"/>
</dbReference>
<dbReference type="InterPro" id="IPR016103">
    <property type="entry name" value="ProQ/FinO"/>
</dbReference>
<dbReference type="InterPro" id="IPR036442">
    <property type="entry name" value="ProQ/FinO_sf"/>
</dbReference>
<dbReference type="InterPro" id="IPR035236">
    <property type="entry name" value="ProQ_C"/>
</dbReference>
<dbReference type="NCBIfam" id="NF003434">
    <property type="entry name" value="PRK04950.1"/>
    <property type="match status" value="1"/>
</dbReference>
<dbReference type="PANTHER" id="PTHR38106">
    <property type="entry name" value="RNA CHAPERONE PROQ"/>
    <property type="match status" value="1"/>
</dbReference>
<dbReference type="PANTHER" id="PTHR38106:SF1">
    <property type="entry name" value="RNA CHAPERONE PROQ"/>
    <property type="match status" value="1"/>
</dbReference>
<dbReference type="Pfam" id="PF04352">
    <property type="entry name" value="ProQ"/>
    <property type="match status" value="1"/>
</dbReference>
<dbReference type="Pfam" id="PF17516">
    <property type="entry name" value="ProQ_C"/>
    <property type="match status" value="1"/>
</dbReference>
<dbReference type="SMART" id="SM00945">
    <property type="entry name" value="ProQ"/>
    <property type="match status" value="1"/>
</dbReference>
<dbReference type="SUPFAM" id="SSF48657">
    <property type="entry name" value="FinO-like"/>
    <property type="match status" value="1"/>
</dbReference>
<keyword id="KW-0143">Chaperone</keyword>
<keyword id="KW-0963">Cytoplasm</keyword>
<keyword id="KW-0694">RNA-binding</keyword>
<reference key="1">
    <citation type="journal article" date="2010" name="J. Bacteriol.">
        <title>Genome sequence of the deep-rooted Yersinia pestis strain Angola reveals new insights into the evolution and pangenome of the plague bacterium.</title>
        <authorList>
            <person name="Eppinger M."/>
            <person name="Worsham P.L."/>
            <person name="Nikolich M.P."/>
            <person name="Riley D.R."/>
            <person name="Sebastian Y."/>
            <person name="Mou S."/>
            <person name="Achtman M."/>
            <person name="Lindler L.E."/>
            <person name="Ravel J."/>
        </authorList>
    </citation>
    <scope>NUCLEOTIDE SEQUENCE [LARGE SCALE GENOMIC DNA]</scope>
    <source>
        <strain>Angola</strain>
    </source>
</reference>
<evidence type="ECO:0000255" key="1">
    <source>
        <dbReference type="HAMAP-Rule" id="MF_00749"/>
    </source>
</evidence>
<evidence type="ECO:0000256" key="2">
    <source>
        <dbReference type="SAM" id="MobiDB-lite"/>
    </source>
</evidence>
<organism>
    <name type="scientific">Yersinia pestis bv. Antiqua (strain Angola)</name>
    <dbReference type="NCBI Taxonomy" id="349746"/>
    <lineage>
        <taxon>Bacteria</taxon>
        <taxon>Pseudomonadati</taxon>
        <taxon>Pseudomonadota</taxon>
        <taxon>Gammaproteobacteria</taxon>
        <taxon>Enterobacterales</taxon>
        <taxon>Yersiniaceae</taxon>
        <taxon>Yersinia</taxon>
    </lineage>
</organism>
<name>PROQ_YERPG</name>
<feature type="chain" id="PRO_1000133313" description="RNA chaperone ProQ">
    <location>
        <begin position="1"/>
        <end position="237"/>
    </location>
</feature>
<feature type="region of interest" description="Disordered" evidence="2">
    <location>
        <begin position="106"/>
        <end position="188"/>
    </location>
</feature>
<feature type="compositionally biased region" description="Basic and acidic residues" evidence="2">
    <location>
        <begin position="146"/>
        <end position="158"/>
    </location>
</feature>